<comment type="function">
    <text evidence="1">Catalyzes the oxidation of 3-carboxy-2-hydroxy-4-methylpentanoate (3-isopropylmalate) to 3-carboxy-4-methyl-2-oxopentanoate. The product decarboxylates to 4-methyl-2 oxopentanoate.</text>
</comment>
<comment type="catalytic activity">
    <reaction evidence="1">
        <text>(2R,3S)-3-isopropylmalate + NAD(+) = 4-methyl-2-oxopentanoate + CO2 + NADH</text>
        <dbReference type="Rhea" id="RHEA:32271"/>
        <dbReference type="ChEBI" id="CHEBI:16526"/>
        <dbReference type="ChEBI" id="CHEBI:17865"/>
        <dbReference type="ChEBI" id="CHEBI:35121"/>
        <dbReference type="ChEBI" id="CHEBI:57540"/>
        <dbReference type="ChEBI" id="CHEBI:57945"/>
        <dbReference type="EC" id="1.1.1.85"/>
    </reaction>
</comment>
<comment type="cofactor">
    <cofactor evidence="1">
        <name>Mg(2+)</name>
        <dbReference type="ChEBI" id="CHEBI:18420"/>
    </cofactor>
    <cofactor evidence="1">
        <name>Mn(2+)</name>
        <dbReference type="ChEBI" id="CHEBI:29035"/>
    </cofactor>
    <text evidence="1">Binds 1 Mg(2+) or Mn(2+) ion per subunit.</text>
</comment>
<comment type="pathway">
    <text evidence="1">Amino-acid biosynthesis; L-leucine biosynthesis; L-leucine from 3-methyl-2-oxobutanoate: step 3/4.</text>
</comment>
<comment type="subunit">
    <text evidence="1">Homodimer.</text>
</comment>
<comment type="subcellular location">
    <subcellularLocation>
        <location evidence="1">Cytoplasm</location>
    </subcellularLocation>
</comment>
<comment type="similarity">
    <text evidence="1">Belongs to the isocitrate and isopropylmalate dehydrogenases family. LeuB type 1 subfamily.</text>
</comment>
<accession>Q2J3B4</accession>
<proteinExistence type="inferred from homology"/>
<keyword id="KW-0028">Amino-acid biosynthesis</keyword>
<keyword id="KW-0100">Branched-chain amino acid biosynthesis</keyword>
<keyword id="KW-0963">Cytoplasm</keyword>
<keyword id="KW-0432">Leucine biosynthesis</keyword>
<keyword id="KW-0460">Magnesium</keyword>
<keyword id="KW-0464">Manganese</keyword>
<keyword id="KW-0479">Metal-binding</keyword>
<keyword id="KW-0520">NAD</keyword>
<keyword id="KW-0560">Oxidoreductase</keyword>
<keyword id="KW-1185">Reference proteome</keyword>
<protein>
    <recommendedName>
        <fullName evidence="1">3-isopropylmalate dehydrogenase</fullName>
        <ecNumber evidence="1">1.1.1.85</ecNumber>
    </recommendedName>
    <alternativeName>
        <fullName evidence="1">3-IPM-DH</fullName>
    </alternativeName>
    <alternativeName>
        <fullName evidence="1">Beta-IPM dehydrogenase</fullName>
        <shortName evidence="1">IMDH</shortName>
    </alternativeName>
</protein>
<name>LEU3_RHOP2</name>
<evidence type="ECO:0000255" key="1">
    <source>
        <dbReference type="HAMAP-Rule" id="MF_01033"/>
    </source>
</evidence>
<organism>
    <name type="scientific">Rhodopseudomonas palustris (strain HaA2)</name>
    <dbReference type="NCBI Taxonomy" id="316058"/>
    <lineage>
        <taxon>Bacteria</taxon>
        <taxon>Pseudomonadati</taxon>
        <taxon>Pseudomonadota</taxon>
        <taxon>Alphaproteobacteria</taxon>
        <taxon>Hyphomicrobiales</taxon>
        <taxon>Nitrobacteraceae</taxon>
        <taxon>Rhodopseudomonas</taxon>
    </lineage>
</organism>
<sequence length="370" mass="39707">MATHKLLLLPGDGIGTEVMAEVSRLIDWLNKAGIASFETEHGLVGGAAYDADKVAITDATMALAQASDAVIFGAVGGPKWDAVPYDARPEAGLLRLRKDLALFANLRPAVCYPALAEASSLKPEVVEGLDIMIVRELTGGVYFGEPKTITDLGNGQKRAIDTQVYDTYEIERIGRVAFDLARKRRNKVTSMEKRNVMKTGVLWNEVITQVHAREYKDVQLEHQLADSGGMNLVKWPKQFDVIVTDNLFGDMLSDIAAMLTGSLGMLPSASLGAVDDTTGKRKAMYEPVHGSAPDIAGKGLANPVAMLASFGMALRYSLDMGELADKLDEAIAVVLARGLRTADIKSEGSTVVSTSQMGEAIVQEMQALHG</sequence>
<reference key="1">
    <citation type="submission" date="2006-01" db="EMBL/GenBank/DDBJ databases">
        <title>Complete sequence of Rhodopseudomonas palustris HaA2.</title>
        <authorList>
            <consortium name="US DOE Joint Genome Institute"/>
            <person name="Copeland A."/>
            <person name="Lucas S."/>
            <person name="Lapidus A."/>
            <person name="Barry K."/>
            <person name="Detter J.C."/>
            <person name="Glavina T."/>
            <person name="Hammon N."/>
            <person name="Israni S."/>
            <person name="Pitluck S."/>
            <person name="Chain P."/>
            <person name="Malfatti S."/>
            <person name="Shin M."/>
            <person name="Vergez L."/>
            <person name="Schmutz J."/>
            <person name="Larimer F."/>
            <person name="Land M."/>
            <person name="Hauser L."/>
            <person name="Pelletier D.A."/>
            <person name="Kyrpides N."/>
            <person name="Anderson I."/>
            <person name="Oda Y."/>
            <person name="Harwood C.S."/>
            <person name="Richardson P."/>
        </authorList>
    </citation>
    <scope>NUCLEOTIDE SEQUENCE [LARGE SCALE GENOMIC DNA]</scope>
    <source>
        <strain>HaA2</strain>
    </source>
</reference>
<feature type="chain" id="PRO_0000250134" description="3-isopropylmalate dehydrogenase">
    <location>
        <begin position="1"/>
        <end position="370"/>
    </location>
</feature>
<feature type="binding site" evidence="1">
    <location>
        <begin position="77"/>
        <end position="90"/>
    </location>
    <ligand>
        <name>NAD(+)</name>
        <dbReference type="ChEBI" id="CHEBI:57540"/>
    </ligand>
</feature>
<feature type="binding site" evidence="1">
    <location>
        <position position="97"/>
    </location>
    <ligand>
        <name>substrate</name>
    </ligand>
</feature>
<feature type="binding site" evidence="1">
    <location>
        <position position="107"/>
    </location>
    <ligand>
        <name>substrate</name>
    </ligand>
</feature>
<feature type="binding site" evidence="1">
    <location>
        <position position="135"/>
    </location>
    <ligand>
        <name>substrate</name>
    </ligand>
</feature>
<feature type="binding site" evidence="1">
    <location>
        <position position="226"/>
    </location>
    <ligand>
        <name>Mg(2+)</name>
        <dbReference type="ChEBI" id="CHEBI:18420"/>
    </ligand>
</feature>
<feature type="binding site" evidence="1">
    <location>
        <position position="226"/>
    </location>
    <ligand>
        <name>substrate</name>
    </ligand>
</feature>
<feature type="binding site" evidence="1">
    <location>
        <position position="250"/>
    </location>
    <ligand>
        <name>Mg(2+)</name>
        <dbReference type="ChEBI" id="CHEBI:18420"/>
    </ligand>
</feature>
<feature type="binding site" evidence="1">
    <location>
        <position position="254"/>
    </location>
    <ligand>
        <name>Mg(2+)</name>
        <dbReference type="ChEBI" id="CHEBI:18420"/>
    </ligand>
</feature>
<feature type="binding site" evidence="1">
    <location>
        <begin position="290"/>
        <end position="302"/>
    </location>
    <ligand>
        <name>NAD(+)</name>
        <dbReference type="ChEBI" id="CHEBI:57540"/>
    </ligand>
</feature>
<feature type="site" description="Important for catalysis" evidence="1">
    <location>
        <position position="142"/>
    </location>
</feature>
<feature type="site" description="Important for catalysis" evidence="1">
    <location>
        <position position="193"/>
    </location>
</feature>
<gene>
    <name evidence="1" type="primary">leuB</name>
    <name type="ordered locus">RPB_0335</name>
</gene>
<dbReference type="EC" id="1.1.1.85" evidence="1"/>
<dbReference type="EMBL" id="CP000250">
    <property type="protein sequence ID" value="ABD05046.1"/>
    <property type="molecule type" value="Genomic_DNA"/>
</dbReference>
<dbReference type="RefSeq" id="WP_011439236.1">
    <property type="nucleotide sequence ID" value="NC_007778.1"/>
</dbReference>
<dbReference type="SMR" id="Q2J3B4"/>
<dbReference type="STRING" id="316058.RPB_0335"/>
<dbReference type="KEGG" id="rpb:RPB_0335"/>
<dbReference type="eggNOG" id="COG0473">
    <property type="taxonomic scope" value="Bacteria"/>
</dbReference>
<dbReference type="HOGENOM" id="CLU_031953_0_3_5"/>
<dbReference type="OrthoDB" id="9767905at2"/>
<dbReference type="UniPathway" id="UPA00048">
    <property type="reaction ID" value="UER00072"/>
</dbReference>
<dbReference type="Proteomes" id="UP000008809">
    <property type="component" value="Chromosome"/>
</dbReference>
<dbReference type="GO" id="GO:0005829">
    <property type="term" value="C:cytosol"/>
    <property type="evidence" value="ECO:0007669"/>
    <property type="project" value="TreeGrafter"/>
</dbReference>
<dbReference type="GO" id="GO:0003862">
    <property type="term" value="F:3-isopropylmalate dehydrogenase activity"/>
    <property type="evidence" value="ECO:0007669"/>
    <property type="project" value="UniProtKB-UniRule"/>
</dbReference>
<dbReference type="GO" id="GO:0000287">
    <property type="term" value="F:magnesium ion binding"/>
    <property type="evidence" value="ECO:0007669"/>
    <property type="project" value="InterPro"/>
</dbReference>
<dbReference type="GO" id="GO:0051287">
    <property type="term" value="F:NAD binding"/>
    <property type="evidence" value="ECO:0007669"/>
    <property type="project" value="InterPro"/>
</dbReference>
<dbReference type="GO" id="GO:0009098">
    <property type="term" value="P:L-leucine biosynthetic process"/>
    <property type="evidence" value="ECO:0007669"/>
    <property type="project" value="UniProtKB-UniRule"/>
</dbReference>
<dbReference type="FunFam" id="3.40.718.10:FF:000006">
    <property type="entry name" value="3-isopropylmalate dehydrogenase"/>
    <property type="match status" value="1"/>
</dbReference>
<dbReference type="Gene3D" id="3.40.718.10">
    <property type="entry name" value="Isopropylmalate Dehydrogenase"/>
    <property type="match status" value="1"/>
</dbReference>
<dbReference type="HAMAP" id="MF_01033">
    <property type="entry name" value="LeuB_type1"/>
    <property type="match status" value="1"/>
</dbReference>
<dbReference type="InterPro" id="IPR019818">
    <property type="entry name" value="IsoCit/isopropylmalate_DH_CS"/>
</dbReference>
<dbReference type="InterPro" id="IPR024084">
    <property type="entry name" value="IsoPropMal-DH-like_dom"/>
</dbReference>
<dbReference type="InterPro" id="IPR004429">
    <property type="entry name" value="Isopropylmalate_DH"/>
</dbReference>
<dbReference type="NCBIfam" id="TIGR00169">
    <property type="entry name" value="leuB"/>
    <property type="match status" value="1"/>
</dbReference>
<dbReference type="PANTHER" id="PTHR42979">
    <property type="entry name" value="3-ISOPROPYLMALATE DEHYDROGENASE"/>
    <property type="match status" value="1"/>
</dbReference>
<dbReference type="PANTHER" id="PTHR42979:SF1">
    <property type="entry name" value="3-ISOPROPYLMALATE DEHYDROGENASE"/>
    <property type="match status" value="1"/>
</dbReference>
<dbReference type="Pfam" id="PF00180">
    <property type="entry name" value="Iso_dh"/>
    <property type="match status" value="1"/>
</dbReference>
<dbReference type="SMART" id="SM01329">
    <property type="entry name" value="Iso_dh"/>
    <property type="match status" value="1"/>
</dbReference>
<dbReference type="SUPFAM" id="SSF53659">
    <property type="entry name" value="Isocitrate/Isopropylmalate dehydrogenase-like"/>
    <property type="match status" value="1"/>
</dbReference>
<dbReference type="PROSITE" id="PS00470">
    <property type="entry name" value="IDH_IMDH"/>
    <property type="match status" value="1"/>
</dbReference>